<organism>
    <name type="scientific">Bos taurus</name>
    <name type="common">Bovine</name>
    <dbReference type="NCBI Taxonomy" id="9913"/>
    <lineage>
        <taxon>Eukaryota</taxon>
        <taxon>Metazoa</taxon>
        <taxon>Chordata</taxon>
        <taxon>Craniata</taxon>
        <taxon>Vertebrata</taxon>
        <taxon>Euteleostomi</taxon>
        <taxon>Mammalia</taxon>
        <taxon>Eutheria</taxon>
        <taxon>Laurasiatheria</taxon>
        <taxon>Artiodactyla</taxon>
        <taxon>Ruminantia</taxon>
        <taxon>Pecora</taxon>
        <taxon>Bovidae</taxon>
        <taxon>Bovinae</taxon>
        <taxon>Bos</taxon>
    </lineage>
</organism>
<keyword id="KW-0053">Apoptosis</keyword>
<keyword id="KW-0221">Differentiation</keyword>
<keyword id="KW-1185">Reference proteome</keyword>
<gene>
    <name type="primary">DAPL1</name>
    <name type="synonym">EEDA</name>
</gene>
<feature type="chain" id="PRO_0000316834" description="Death-associated protein-like 1">
    <location>
        <begin position="1"/>
        <end position="107"/>
    </location>
</feature>
<feature type="region of interest" description="Disordered" evidence="1">
    <location>
        <begin position="1"/>
        <end position="26"/>
    </location>
</feature>
<feature type="sequence conflict" description="In Ref. 1; AAY62365." evidence="3" ref="1">
    <original>K</original>
    <variation>N</variation>
    <location>
        <position position="106"/>
    </location>
</feature>
<reference key="1">
    <citation type="journal article" date="2006" name="J. Cell. Physiol.">
        <title>EEDA: a protein associated with an early stage of stratified epithelial differentiation.</title>
        <authorList>
            <person name="Sun L."/>
            <person name="Ryan D.G."/>
            <person name="Zhou M."/>
            <person name="Sun T.-T."/>
            <person name="Lavker R.M."/>
        </authorList>
    </citation>
    <scope>NUCLEOTIDE SEQUENCE [MRNA]</scope>
    <scope>FUNCTION</scope>
    <scope>TISSUE SPECIFICITY</scope>
    <source>
        <tissue>Corneal epithelium</tissue>
    </source>
</reference>
<reference key="2">
    <citation type="submission" date="2007-02" db="EMBL/GenBank/DDBJ databases">
        <authorList>
            <consortium name="NIH - Mammalian Gene Collection (MGC) project"/>
        </authorList>
    </citation>
    <scope>NUCLEOTIDE SEQUENCE [LARGE SCALE MRNA]</scope>
    <source>
        <strain>Hereford</strain>
        <tissue>Thymus</tissue>
    </source>
</reference>
<sequence>MANEVQVQLSPLKGGHPPAVKAGGKRISKKQEIGILERHTKKTGLEKTSATANVAKIQTMDALNDTLEKLSHKFPAVAHMAHQKPRPALEKVTPLKRIYIIQQPRKC</sequence>
<name>DAPL1_BOVIN</name>
<accession>A2VEA7</accession>
<accession>Q4PP00</accession>
<dbReference type="EMBL" id="DQ062556">
    <property type="protein sequence ID" value="AAY62365.1"/>
    <property type="molecule type" value="mRNA"/>
</dbReference>
<dbReference type="EMBL" id="BC133652">
    <property type="protein sequence ID" value="AAI33653.1"/>
    <property type="molecule type" value="mRNA"/>
</dbReference>
<dbReference type="RefSeq" id="NP_001020517.1">
    <property type="nucleotide sequence ID" value="NM_001025346.1"/>
</dbReference>
<dbReference type="SMR" id="A2VEA7"/>
<dbReference type="FunCoup" id="A2VEA7">
    <property type="interactions" value="46"/>
</dbReference>
<dbReference type="STRING" id="9913.ENSBTAP00000069026"/>
<dbReference type="PaxDb" id="9913-ENSBTAP00000043391"/>
<dbReference type="Ensembl" id="ENSBTAT00000046063.5">
    <property type="protein sequence ID" value="ENSBTAP00000043391.3"/>
    <property type="gene ID" value="ENSBTAG00000032481.5"/>
</dbReference>
<dbReference type="GeneID" id="574085"/>
<dbReference type="KEGG" id="bta:574085"/>
<dbReference type="CTD" id="92196"/>
<dbReference type="VEuPathDB" id="HostDB:ENSBTAG00000032481"/>
<dbReference type="VGNC" id="VGNC:27879">
    <property type="gene designation" value="DAPL1"/>
</dbReference>
<dbReference type="eggNOG" id="ENOG502S7Q6">
    <property type="taxonomic scope" value="Eukaryota"/>
</dbReference>
<dbReference type="GeneTree" id="ENSGT00940000154574"/>
<dbReference type="HOGENOM" id="CLU_150759_0_0_1"/>
<dbReference type="InParanoid" id="A2VEA7"/>
<dbReference type="OMA" id="PNRMQQV"/>
<dbReference type="OrthoDB" id="9934354at2759"/>
<dbReference type="TreeFam" id="TF329716"/>
<dbReference type="Proteomes" id="UP000009136">
    <property type="component" value="Chromosome 2"/>
</dbReference>
<dbReference type="Bgee" id="ENSBTAG00000032481">
    <property type="expression patterns" value="Expressed in rumen papilla and 94 other cell types or tissues"/>
</dbReference>
<dbReference type="GO" id="GO:0043022">
    <property type="term" value="F:ribosome binding"/>
    <property type="evidence" value="ECO:0000250"/>
    <property type="project" value="UniProtKB"/>
</dbReference>
<dbReference type="GO" id="GO:0031369">
    <property type="term" value="F:translation initiation factor binding"/>
    <property type="evidence" value="ECO:0000250"/>
    <property type="project" value="UniProtKB"/>
</dbReference>
<dbReference type="GO" id="GO:0030371">
    <property type="term" value="F:translation repressor activity"/>
    <property type="evidence" value="ECO:0000250"/>
    <property type="project" value="UniProtKB"/>
</dbReference>
<dbReference type="GO" id="GO:0097190">
    <property type="term" value="P:apoptotic signaling pathway"/>
    <property type="evidence" value="ECO:0000318"/>
    <property type="project" value="GO_Central"/>
</dbReference>
<dbReference type="GO" id="GO:0030154">
    <property type="term" value="P:cell differentiation"/>
    <property type="evidence" value="ECO:0007669"/>
    <property type="project" value="UniProtKB-KW"/>
</dbReference>
<dbReference type="GO" id="GO:0010507">
    <property type="term" value="P:negative regulation of autophagy"/>
    <property type="evidence" value="ECO:0000318"/>
    <property type="project" value="GO_Central"/>
</dbReference>
<dbReference type="GO" id="GO:2001186">
    <property type="term" value="P:negative regulation of CD8-positive, alpha-beta T cell activation"/>
    <property type="evidence" value="ECO:0000250"/>
    <property type="project" value="UniProtKB"/>
</dbReference>
<dbReference type="GO" id="GO:0141014">
    <property type="term" value="P:ribosome hibernation"/>
    <property type="evidence" value="ECO:0000250"/>
    <property type="project" value="UniProtKB"/>
</dbReference>
<dbReference type="InterPro" id="IPR024130">
    <property type="entry name" value="DAP1/DAPL1"/>
</dbReference>
<dbReference type="PANTHER" id="PTHR13177">
    <property type="entry name" value="DEATH-ASSOCIATED PROTEIN 1"/>
    <property type="match status" value="1"/>
</dbReference>
<dbReference type="PANTHER" id="PTHR13177:SF2">
    <property type="entry name" value="DEATH-ASSOCIATED PROTEIN-LIKE 1"/>
    <property type="match status" value="1"/>
</dbReference>
<dbReference type="Pfam" id="PF15228">
    <property type="entry name" value="DAP"/>
    <property type="match status" value="1"/>
</dbReference>
<proteinExistence type="evidence at transcript level"/>
<protein>
    <recommendedName>
        <fullName>Death-associated protein-like 1</fullName>
    </recommendedName>
    <alternativeName>
        <fullName>Early epithelial differentiation-associated protein</fullName>
    </alternativeName>
</protein>
<evidence type="ECO:0000256" key="1">
    <source>
        <dbReference type="SAM" id="MobiDB-lite"/>
    </source>
</evidence>
<evidence type="ECO:0000269" key="2">
    <source>
    </source>
</evidence>
<evidence type="ECO:0000305" key="3"/>
<comment type="function">
    <text evidence="2">May play a role in the early stages of epithelial differentiation or in apoptosis.</text>
</comment>
<comment type="tissue specificity">
    <text evidence="2">Detected in the corneal epithelium, and only in trace amounts in the liver, bladder, brain, heart, and stomach.</text>
</comment>